<gene>
    <name type="primary">vif</name>
</gene>
<accession>P15834</accession>
<proteinExistence type="evidence at transcript level"/>
<reference key="1">
    <citation type="journal article" date="1989" name="Nature">
        <title>A highly divergent HIV-2-related isolate.</title>
        <authorList>
            <person name="Dietrich U."/>
            <person name="Adamski M."/>
            <person name="Kreutz R."/>
            <person name="Seipp A."/>
            <person name="Kuehnel H."/>
            <person name="Ruebsamen-Waigmann H."/>
        </authorList>
    </citation>
    <scope>NUCLEOTIDE SEQUENCE [GENOMIC DNA]</scope>
</reference>
<protein>
    <recommendedName>
        <fullName>Virion infectivity factor</fullName>
        <shortName>Vif</shortName>
    </recommendedName>
    <alternativeName>
        <fullName>Q protein</fullName>
    </alternativeName>
    <alternativeName>
        <fullName>SOR protein</fullName>
    </alternativeName>
</protein>
<organismHost>
    <name type="scientific">Homo sapiens</name>
    <name type="common">Human</name>
    <dbReference type="NCBI Taxonomy" id="9606"/>
</organismHost>
<comment type="function">
    <text evidence="1">Counteracts the innate antiviral activity of APOBEC3G. Forms a complex with host APOBEC3G thus preventing the entry of this lethally hypermutating enzyme into progeny virions. Functions as an adapter molecule, recruiting APOBEC3G to the ubiquitin-proteasome machinery. Targets APOBEC3G for degradation through the assembly with elongin BC complex, CUL5 and RBX1. Binds viral RNA and affects the stability of viral nucleoprotein core. May play a role in viral morphology (By similarity).</text>
</comment>
<comment type="subunit">
    <text evidence="1">Homomultimer; in vitro and presumably in vivo. Interacts with viral Pr55Gag precursor and human APOBEC3G. The interaction between Vif and APOBEC3G is species-specific, which may play a role in restricting the replication of HIV to humans. Forms an E3 ligase complex by interacting with human CUL5 and elongin BC complex (ELOB and ELOC) (By similarity).</text>
</comment>
<comment type="subcellular location">
    <subcellularLocation>
        <location evidence="1">Host cytoplasm</location>
    </subcellularLocation>
    <subcellularLocation>
        <location evidence="1">Host cell membrane</location>
        <topology evidence="1">Peripheral membrane protein</topology>
        <orientation evidence="1">Cytoplasmic side</orientation>
    </subcellularLocation>
    <subcellularLocation>
        <location evidence="1">Virion</location>
    </subcellularLocation>
    <text evidence="1">In the cytoplasm, seems to colocalize with intermediate filament vimentin. A fraction is associated with the cytoplasmic side of cellular membranes, presumably via the interaction with Pr55Gag precursor (By similarity).</text>
</comment>
<comment type="induction">
    <text>Expressed late during infection in a Rev-dependent manner.</text>
</comment>
<comment type="domain">
    <text evidence="1">The BC-like-box motif mediates the interaction with elongin BC complex.</text>
</comment>
<comment type="domain">
    <text evidence="1">The HCCH motif (H-x(5)-C-x(18)-C-x(5)-H) mediates the interaction with CUL5.</text>
</comment>
<comment type="PTM">
    <text evidence="1">Processed in virion by the viral protease.</text>
</comment>
<comment type="PTM">
    <text evidence="1">Highly phosphorylated on serine and threonine residues.</text>
</comment>
<comment type="PTM">
    <text evidence="1">Polyubiquitinated and degraded by the proteasome in the presence of APOBEC3G.</text>
</comment>
<comment type="miscellaneous">
    <text>Required for replication in 'nonpermissive' cells, including primary T-cells, macrophages and certain T-cell lines, but is dispensable for replication in 'permissive' cell lines, such as 293T cells. In nonpermissive cells, Vif-defective viruses can produce virions, but they fail to complete reverse transcription and cannot successfully infect new cells.</text>
</comment>
<comment type="miscellaneous">
    <text>Vif-defective viruses show catastrophic failure in reverse transcription due to APOBEC-induced mutations that initiate a DNA base repair pathway and compromise the structural integrity of the ssDNA. In the absence of Vif, the virion is morphologically abnormal.</text>
</comment>
<comment type="similarity">
    <text evidence="3">Belongs to the primate lentivirus group Vif protein family.</text>
</comment>
<keyword id="KW-0014">AIDS</keyword>
<keyword id="KW-1032">Host cell membrane</keyword>
<keyword id="KW-1035">Host cytoplasm</keyword>
<keyword id="KW-1043">Host membrane</keyword>
<keyword id="KW-0945">Host-virus interaction</keyword>
<keyword id="KW-0472">Membrane</keyword>
<keyword id="KW-0597">Phosphoprotein</keyword>
<keyword id="KW-0832">Ubl conjugation</keyword>
<keyword id="KW-0833">Ubl conjugation pathway</keyword>
<keyword id="KW-0946">Virion</keyword>
<evidence type="ECO:0000250" key="1"/>
<evidence type="ECO:0000256" key="2">
    <source>
        <dbReference type="SAM" id="MobiDB-lite"/>
    </source>
</evidence>
<evidence type="ECO:0000305" key="3"/>
<sequence>MEEEKDWIVVPTWRIPGRLERWHSLIKYLKYRTGELQQVSYVPHHKVGWAWWTCSRIIFPLNKGAWLEVQGYWNLTPERGFLSSYAVRLTWYERNFYTDVTPDVADQLLHGSYFSCFSANEVRRAIRGEKILSYCNYPSAHEGQVPSLQFLALRVVQEGKNGSQGESATRKQRRRNSRRSIRLARKNNNRAQQGSGQPFAPRTYFPGLAEVLGILA</sequence>
<dbReference type="EMBL" id="X61240">
    <property type="status" value="NOT_ANNOTATED_CDS"/>
    <property type="molecule type" value="Genomic_DNA"/>
</dbReference>
<dbReference type="PIR" id="S08437">
    <property type="entry name" value="S08437"/>
</dbReference>
<dbReference type="SMR" id="P15834"/>
<dbReference type="Proteomes" id="UP000247120">
    <property type="component" value="Segment"/>
</dbReference>
<dbReference type="GO" id="GO:0030430">
    <property type="term" value="C:host cell cytoplasm"/>
    <property type="evidence" value="ECO:0007669"/>
    <property type="project" value="UniProtKB-SubCell"/>
</dbReference>
<dbReference type="GO" id="GO:0020002">
    <property type="term" value="C:host cell plasma membrane"/>
    <property type="evidence" value="ECO:0007669"/>
    <property type="project" value="UniProtKB-SubCell"/>
</dbReference>
<dbReference type="GO" id="GO:0016020">
    <property type="term" value="C:membrane"/>
    <property type="evidence" value="ECO:0007669"/>
    <property type="project" value="UniProtKB-KW"/>
</dbReference>
<dbReference type="GO" id="GO:0044423">
    <property type="term" value="C:virion component"/>
    <property type="evidence" value="ECO:0007669"/>
    <property type="project" value="UniProtKB-KW"/>
</dbReference>
<dbReference type="GO" id="GO:0019058">
    <property type="term" value="P:viral life cycle"/>
    <property type="evidence" value="ECO:0007669"/>
    <property type="project" value="InterPro"/>
</dbReference>
<dbReference type="InterPro" id="IPR000475">
    <property type="entry name" value="Vif"/>
</dbReference>
<dbReference type="Pfam" id="PF00559">
    <property type="entry name" value="Vif"/>
    <property type="match status" value="1"/>
</dbReference>
<dbReference type="PRINTS" id="PR00349">
    <property type="entry name" value="VIRIONINFFCT"/>
</dbReference>
<feature type="chain" id="PRO_0000085319" description="Virion infectivity factor">
    <location>
        <begin position="1"/>
        <end position="216"/>
    </location>
</feature>
<feature type="region of interest" description="Multimerization" evidence="1">
    <location>
        <begin position="154"/>
        <end position="167"/>
    </location>
</feature>
<feature type="region of interest" description="Disordered" evidence="2">
    <location>
        <begin position="161"/>
        <end position="201"/>
    </location>
</feature>
<feature type="short sequence motif" description="HCCH motif" evidence="1">
    <location>
        <begin position="110"/>
        <end position="141"/>
    </location>
</feature>
<feature type="short sequence motif" description="BC-box-like motif" evidence="1">
    <location>
        <begin position="147"/>
        <end position="156"/>
    </location>
</feature>
<feature type="compositionally biased region" description="Basic residues" evidence="2">
    <location>
        <begin position="170"/>
        <end position="188"/>
    </location>
</feature>
<feature type="modified residue" description="Phosphothreonine; by host MAP4K1" evidence="1">
    <location>
        <position position="98"/>
    </location>
</feature>
<feature type="modified residue" description="Phosphoserine; by host" evidence="1">
    <location>
        <position position="147"/>
    </location>
</feature>
<organism>
    <name type="scientific">Human immunodeficiency virus type 2 subtype B (isolate D205)</name>
    <name type="common">HIV-2</name>
    <dbReference type="NCBI Taxonomy" id="11716"/>
    <lineage>
        <taxon>Viruses</taxon>
        <taxon>Riboviria</taxon>
        <taxon>Pararnavirae</taxon>
        <taxon>Artverviricota</taxon>
        <taxon>Revtraviricetes</taxon>
        <taxon>Ortervirales</taxon>
        <taxon>Retroviridae</taxon>
        <taxon>Orthoretrovirinae</taxon>
        <taxon>Lentivirus</taxon>
        <taxon>Human immunodeficiency virus 2</taxon>
    </lineage>
</organism>
<name>VIF_HV2D2</name>